<evidence type="ECO:0000255" key="1">
    <source>
        <dbReference type="HAMAP-Rule" id="MF_00313"/>
    </source>
</evidence>
<reference key="1">
    <citation type="journal article" date="2001" name="Science">
        <title>The genome of the natural genetic engineer Agrobacterium tumefaciens C58.</title>
        <authorList>
            <person name="Wood D.W."/>
            <person name="Setubal J.C."/>
            <person name="Kaul R."/>
            <person name="Monks D.E."/>
            <person name="Kitajima J.P."/>
            <person name="Okura V.K."/>
            <person name="Zhou Y."/>
            <person name="Chen L."/>
            <person name="Wood G.E."/>
            <person name="Almeida N.F. Jr."/>
            <person name="Woo L."/>
            <person name="Chen Y."/>
            <person name="Paulsen I.T."/>
            <person name="Eisen J.A."/>
            <person name="Karp P.D."/>
            <person name="Bovee D. Sr."/>
            <person name="Chapman P."/>
            <person name="Clendenning J."/>
            <person name="Deatherage G."/>
            <person name="Gillet W."/>
            <person name="Grant C."/>
            <person name="Kutyavin T."/>
            <person name="Levy R."/>
            <person name="Li M.-J."/>
            <person name="McClelland E."/>
            <person name="Palmieri A."/>
            <person name="Raymond C."/>
            <person name="Rouse G."/>
            <person name="Saenphimmachak C."/>
            <person name="Wu Z."/>
            <person name="Romero P."/>
            <person name="Gordon D."/>
            <person name="Zhang S."/>
            <person name="Yoo H."/>
            <person name="Tao Y."/>
            <person name="Biddle P."/>
            <person name="Jung M."/>
            <person name="Krespan W."/>
            <person name="Perry M."/>
            <person name="Gordon-Kamm B."/>
            <person name="Liao L."/>
            <person name="Kim S."/>
            <person name="Hendrick C."/>
            <person name="Zhao Z.-Y."/>
            <person name="Dolan M."/>
            <person name="Chumley F."/>
            <person name="Tingey S.V."/>
            <person name="Tomb J.-F."/>
            <person name="Gordon M.P."/>
            <person name="Olson M.V."/>
            <person name="Nester E.W."/>
        </authorList>
    </citation>
    <scope>NUCLEOTIDE SEQUENCE [LARGE SCALE GENOMIC DNA]</scope>
    <source>
        <strain>C58 / ATCC 33970</strain>
    </source>
</reference>
<reference key="2">
    <citation type="journal article" date="2001" name="Science">
        <title>Genome sequence of the plant pathogen and biotechnology agent Agrobacterium tumefaciens C58.</title>
        <authorList>
            <person name="Goodner B."/>
            <person name="Hinkle G."/>
            <person name="Gattung S."/>
            <person name="Miller N."/>
            <person name="Blanchard M."/>
            <person name="Qurollo B."/>
            <person name="Goldman B.S."/>
            <person name="Cao Y."/>
            <person name="Askenazi M."/>
            <person name="Halling C."/>
            <person name="Mullin L."/>
            <person name="Houmiel K."/>
            <person name="Gordon J."/>
            <person name="Vaudin M."/>
            <person name="Iartchouk O."/>
            <person name="Epp A."/>
            <person name="Liu F."/>
            <person name="Wollam C."/>
            <person name="Allinger M."/>
            <person name="Doughty D."/>
            <person name="Scott C."/>
            <person name="Lappas C."/>
            <person name="Markelz B."/>
            <person name="Flanagan C."/>
            <person name="Crowell C."/>
            <person name="Gurson J."/>
            <person name="Lomo C."/>
            <person name="Sear C."/>
            <person name="Strub G."/>
            <person name="Cielo C."/>
            <person name="Slater S."/>
        </authorList>
    </citation>
    <scope>NUCLEOTIDE SEQUENCE [LARGE SCALE GENOMIC DNA]</scope>
    <source>
        <strain>C58 / ATCC 33970</strain>
    </source>
</reference>
<proteinExistence type="inferred from homology"/>
<name>GLSA_AGRFC</name>
<comment type="catalytic activity">
    <reaction evidence="1">
        <text>L-glutamine + H2O = L-glutamate + NH4(+)</text>
        <dbReference type="Rhea" id="RHEA:15889"/>
        <dbReference type="ChEBI" id="CHEBI:15377"/>
        <dbReference type="ChEBI" id="CHEBI:28938"/>
        <dbReference type="ChEBI" id="CHEBI:29985"/>
        <dbReference type="ChEBI" id="CHEBI:58359"/>
        <dbReference type="EC" id="3.5.1.2"/>
    </reaction>
</comment>
<comment type="subunit">
    <text evidence="1">Homotetramer.</text>
</comment>
<comment type="similarity">
    <text evidence="1">Belongs to the glutaminase family.</text>
</comment>
<gene>
    <name evidence="1" type="primary">glsA</name>
    <name type="ordered locus">Atu1859</name>
    <name type="ORF">AGR_C_3412</name>
</gene>
<protein>
    <recommendedName>
        <fullName evidence="1">Glutaminase</fullName>
        <ecNumber evidence="1">3.5.1.2</ecNumber>
    </recommendedName>
</protein>
<accession>Q8UEA1</accession>
<keyword id="KW-0378">Hydrolase</keyword>
<keyword id="KW-1185">Reference proteome</keyword>
<dbReference type="EC" id="3.5.1.2" evidence="1"/>
<dbReference type="EMBL" id="AE007869">
    <property type="protein sequence ID" value="AAK87626.1"/>
    <property type="molecule type" value="Genomic_DNA"/>
</dbReference>
<dbReference type="PIR" id="A97584">
    <property type="entry name" value="A97584"/>
</dbReference>
<dbReference type="PIR" id="AI2804">
    <property type="entry name" value="AI2804"/>
</dbReference>
<dbReference type="RefSeq" id="NP_354841.1">
    <property type="nucleotide sequence ID" value="NC_003062.2"/>
</dbReference>
<dbReference type="RefSeq" id="WP_006314081.1">
    <property type="nucleotide sequence ID" value="NC_003062.2"/>
</dbReference>
<dbReference type="SMR" id="Q8UEA1"/>
<dbReference type="STRING" id="176299.Atu1859"/>
<dbReference type="EnsemblBacteria" id="AAK87626">
    <property type="protein sequence ID" value="AAK87626"/>
    <property type="gene ID" value="Atu1859"/>
</dbReference>
<dbReference type="GeneID" id="1133897"/>
<dbReference type="KEGG" id="atu:Atu1859"/>
<dbReference type="PATRIC" id="fig|176299.10.peg.1872"/>
<dbReference type="eggNOG" id="COG2066">
    <property type="taxonomic scope" value="Bacteria"/>
</dbReference>
<dbReference type="HOGENOM" id="CLU_027932_1_1_5"/>
<dbReference type="OrthoDB" id="9788822at2"/>
<dbReference type="PhylomeDB" id="Q8UEA1"/>
<dbReference type="BioCyc" id="AGRO:ATU1859-MONOMER"/>
<dbReference type="Proteomes" id="UP000000813">
    <property type="component" value="Chromosome circular"/>
</dbReference>
<dbReference type="GO" id="GO:0004359">
    <property type="term" value="F:glutaminase activity"/>
    <property type="evidence" value="ECO:0007669"/>
    <property type="project" value="UniProtKB-UniRule"/>
</dbReference>
<dbReference type="GO" id="GO:0006537">
    <property type="term" value="P:glutamate biosynthetic process"/>
    <property type="evidence" value="ECO:0007669"/>
    <property type="project" value="TreeGrafter"/>
</dbReference>
<dbReference type="GO" id="GO:0006543">
    <property type="term" value="P:glutamine catabolic process"/>
    <property type="evidence" value="ECO:0007669"/>
    <property type="project" value="TreeGrafter"/>
</dbReference>
<dbReference type="FunFam" id="3.40.710.10:FF:000005">
    <property type="entry name" value="Glutaminase"/>
    <property type="match status" value="1"/>
</dbReference>
<dbReference type="Gene3D" id="3.40.710.10">
    <property type="entry name" value="DD-peptidase/beta-lactamase superfamily"/>
    <property type="match status" value="1"/>
</dbReference>
<dbReference type="HAMAP" id="MF_00313">
    <property type="entry name" value="Glutaminase"/>
    <property type="match status" value="1"/>
</dbReference>
<dbReference type="InterPro" id="IPR012338">
    <property type="entry name" value="Beta-lactam/transpept-like"/>
</dbReference>
<dbReference type="InterPro" id="IPR015868">
    <property type="entry name" value="Glutaminase"/>
</dbReference>
<dbReference type="NCBIfam" id="TIGR03814">
    <property type="entry name" value="Gln_ase"/>
    <property type="match status" value="1"/>
</dbReference>
<dbReference type="NCBIfam" id="NF002132">
    <property type="entry name" value="PRK00971.1-1"/>
    <property type="match status" value="1"/>
</dbReference>
<dbReference type="NCBIfam" id="NF002133">
    <property type="entry name" value="PRK00971.1-2"/>
    <property type="match status" value="1"/>
</dbReference>
<dbReference type="PANTHER" id="PTHR12544">
    <property type="entry name" value="GLUTAMINASE"/>
    <property type="match status" value="1"/>
</dbReference>
<dbReference type="PANTHER" id="PTHR12544:SF29">
    <property type="entry name" value="GLUTAMINASE"/>
    <property type="match status" value="1"/>
</dbReference>
<dbReference type="Pfam" id="PF04960">
    <property type="entry name" value="Glutaminase"/>
    <property type="match status" value="1"/>
</dbReference>
<dbReference type="SUPFAM" id="SSF56601">
    <property type="entry name" value="beta-lactamase/transpeptidase-like"/>
    <property type="match status" value="1"/>
</dbReference>
<sequence length="309" mass="32926">MQDIQGIVDSIYDSMLPRLGEGKVADYIPELAKVDPNQFGIAITTVDGTTYTAGNALVPFSIQSISKVFMLTLALGKAGETVWNRVGREPSGSSFNSIVQLEHEHGIPRNPFVNAGAIVVTDIVLSGHQPREAIGELLRFVRYLADDDTISIDDTVAKSEQATGFRNFALANFMRSFGNLHHPVEHTLGVYFHQCALSMTCAQLSRAGLFLANRGRNPLSGHTVVSDRRARRINALMLTCGHYDGSGDFAYHVGLPGKSGVGGGIMAVAPGNASIAVWSPGLNKVGNSALGSQALELLATKTGWSVFGA</sequence>
<feature type="chain" id="PRO_0000110586" description="Glutaminase">
    <location>
        <begin position="1"/>
        <end position="309"/>
    </location>
</feature>
<feature type="binding site" evidence="1">
    <location>
        <position position="64"/>
    </location>
    <ligand>
        <name>substrate</name>
    </ligand>
</feature>
<feature type="binding site" evidence="1">
    <location>
        <position position="114"/>
    </location>
    <ligand>
        <name>substrate</name>
    </ligand>
</feature>
<feature type="binding site" evidence="1">
    <location>
        <position position="160"/>
    </location>
    <ligand>
        <name>substrate</name>
    </ligand>
</feature>
<feature type="binding site" evidence="1">
    <location>
        <position position="167"/>
    </location>
    <ligand>
        <name>substrate</name>
    </ligand>
</feature>
<feature type="binding site" evidence="1">
    <location>
        <position position="191"/>
    </location>
    <ligand>
        <name>substrate</name>
    </ligand>
</feature>
<feature type="binding site" evidence="1">
    <location>
        <position position="243"/>
    </location>
    <ligand>
        <name>substrate</name>
    </ligand>
</feature>
<feature type="binding site" evidence="1">
    <location>
        <position position="261"/>
    </location>
    <ligand>
        <name>substrate</name>
    </ligand>
</feature>
<organism>
    <name type="scientific">Agrobacterium fabrum (strain C58 / ATCC 33970)</name>
    <name type="common">Agrobacterium tumefaciens (strain C58)</name>
    <dbReference type="NCBI Taxonomy" id="176299"/>
    <lineage>
        <taxon>Bacteria</taxon>
        <taxon>Pseudomonadati</taxon>
        <taxon>Pseudomonadota</taxon>
        <taxon>Alphaproteobacteria</taxon>
        <taxon>Hyphomicrobiales</taxon>
        <taxon>Rhizobiaceae</taxon>
        <taxon>Rhizobium/Agrobacterium group</taxon>
        <taxon>Agrobacterium</taxon>
        <taxon>Agrobacterium tumefaciens complex</taxon>
    </lineage>
</organism>